<dbReference type="EC" id="3.1.3.92"/>
<dbReference type="EMBL" id="Y14081">
    <property type="protein sequence ID" value="CAA74473.1"/>
    <property type="molecule type" value="Genomic_DNA"/>
</dbReference>
<dbReference type="EMBL" id="AL009126">
    <property type="protein sequence ID" value="CAB12894.2"/>
    <property type="molecule type" value="Genomic_DNA"/>
</dbReference>
<dbReference type="PIR" id="B69834">
    <property type="entry name" value="B69834"/>
</dbReference>
<dbReference type="RefSeq" id="NP_388935.2">
    <property type="nucleotide sequence ID" value="NC_000964.3"/>
</dbReference>
<dbReference type="RefSeq" id="WP_003244845.1">
    <property type="nucleotide sequence ID" value="NZ_OZ025638.1"/>
</dbReference>
<dbReference type="PDB" id="3GYG">
    <property type="method" value="X-ray"/>
    <property type="resolution" value="2.45 A"/>
    <property type="chains" value="A/B/C/D=1-282"/>
</dbReference>
<dbReference type="PDBsum" id="3GYG"/>
<dbReference type="SMR" id="O07565"/>
<dbReference type="FunCoup" id="O07565">
    <property type="interactions" value="29"/>
</dbReference>
<dbReference type="STRING" id="224308.BSU10540"/>
<dbReference type="PaxDb" id="224308-BSU10540"/>
<dbReference type="EnsemblBacteria" id="CAB12894">
    <property type="protein sequence ID" value="CAB12894"/>
    <property type="gene ID" value="BSU_10540"/>
</dbReference>
<dbReference type="GeneID" id="939323"/>
<dbReference type="KEGG" id="bsu:BSU10540"/>
<dbReference type="PATRIC" id="fig|224308.179.peg.1133"/>
<dbReference type="eggNOG" id="COG0561">
    <property type="taxonomic scope" value="Bacteria"/>
</dbReference>
<dbReference type="InParanoid" id="O07565"/>
<dbReference type="OrthoDB" id="9781413at2"/>
<dbReference type="BioCyc" id="BSUB:BSU10540-MONOMER"/>
<dbReference type="BioCyc" id="MetaCyc:BSU10540-MONOMER"/>
<dbReference type="BRENDA" id="3.1.3.92">
    <property type="organism ID" value="658"/>
</dbReference>
<dbReference type="SABIO-RK" id="O07565"/>
<dbReference type="UniPathway" id="UPA01036"/>
<dbReference type="EvolutionaryTrace" id="O07565"/>
<dbReference type="Proteomes" id="UP000001570">
    <property type="component" value="Chromosome"/>
</dbReference>
<dbReference type="GO" id="GO:0005829">
    <property type="term" value="C:cytosol"/>
    <property type="evidence" value="ECO:0000318"/>
    <property type="project" value="GO_Central"/>
</dbReference>
<dbReference type="GO" id="GO:0000287">
    <property type="term" value="F:magnesium ion binding"/>
    <property type="evidence" value="ECO:0000318"/>
    <property type="project" value="GO_Central"/>
</dbReference>
<dbReference type="GO" id="GO:0016791">
    <property type="term" value="F:phosphatase activity"/>
    <property type="evidence" value="ECO:0000314"/>
    <property type="project" value="UniProtKB"/>
</dbReference>
<dbReference type="GO" id="GO:0017000">
    <property type="term" value="P:antibiotic biosynthetic process"/>
    <property type="evidence" value="ECO:0000314"/>
    <property type="project" value="UniProtKB"/>
</dbReference>
<dbReference type="CDD" id="cd02605">
    <property type="entry name" value="HAD_SPP"/>
    <property type="match status" value="1"/>
</dbReference>
<dbReference type="Gene3D" id="3.40.50.1000">
    <property type="entry name" value="HAD superfamily/HAD-like"/>
    <property type="match status" value="1"/>
</dbReference>
<dbReference type="Gene3D" id="3.30.70.1410">
    <property type="entry name" value="yhjk (haloacid dehalogenase-like hydrolase protein) domain"/>
    <property type="match status" value="1"/>
</dbReference>
<dbReference type="InterPro" id="IPR036412">
    <property type="entry name" value="HAD-like_sf"/>
</dbReference>
<dbReference type="InterPro" id="IPR006379">
    <property type="entry name" value="HAD-SF_hydro_IIB"/>
</dbReference>
<dbReference type="InterPro" id="IPR023214">
    <property type="entry name" value="HAD_sf"/>
</dbReference>
<dbReference type="InterPro" id="IPR006380">
    <property type="entry name" value="SPP-like_dom"/>
</dbReference>
<dbReference type="NCBIfam" id="TIGR01484">
    <property type="entry name" value="HAD-SF-IIB"/>
    <property type="match status" value="1"/>
</dbReference>
<dbReference type="PANTHER" id="PTHR10000:SF57">
    <property type="entry name" value="KANOSAMINE-6-PHOSPHATE PHOSPHATASE"/>
    <property type="match status" value="1"/>
</dbReference>
<dbReference type="PANTHER" id="PTHR10000">
    <property type="entry name" value="PHOSPHOSERINE PHOSPHATASE"/>
    <property type="match status" value="1"/>
</dbReference>
<dbReference type="Pfam" id="PF05116">
    <property type="entry name" value="S6PP"/>
    <property type="match status" value="1"/>
</dbReference>
<dbReference type="SFLD" id="SFLDG01141">
    <property type="entry name" value="C2.B.1:_Sucrose_Phosphatase_Li"/>
    <property type="match status" value="1"/>
</dbReference>
<dbReference type="SFLD" id="SFLDS00003">
    <property type="entry name" value="Haloacid_Dehalogenase"/>
    <property type="match status" value="1"/>
</dbReference>
<dbReference type="SUPFAM" id="SSF56784">
    <property type="entry name" value="HAD-like"/>
    <property type="match status" value="1"/>
</dbReference>
<dbReference type="PROSITE" id="PS01229">
    <property type="entry name" value="COF_2"/>
    <property type="match status" value="1"/>
</dbReference>
<organism>
    <name type="scientific">Bacillus subtilis (strain 168)</name>
    <dbReference type="NCBI Taxonomy" id="224308"/>
    <lineage>
        <taxon>Bacteria</taxon>
        <taxon>Bacillati</taxon>
        <taxon>Bacillota</taxon>
        <taxon>Bacilli</taxon>
        <taxon>Bacillales</taxon>
        <taxon>Bacillaceae</taxon>
        <taxon>Bacillus</taxon>
    </lineage>
</organism>
<evidence type="ECO:0000250" key="1"/>
<evidence type="ECO:0000269" key="2">
    <source>
    </source>
</evidence>
<evidence type="ECO:0000269" key="3">
    <source>
    </source>
</evidence>
<evidence type="ECO:0000269" key="4">
    <source>
    </source>
</evidence>
<evidence type="ECO:0000269" key="5">
    <source ref="7"/>
</evidence>
<evidence type="ECO:0000305" key="6"/>
<evidence type="ECO:0000305" key="7">
    <source>
    </source>
</evidence>
<evidence type="ECO:0007829" key="8">
    <source>
        <dbReference type="PDB" id="3GYG"/>
    </source>
</evidence>
<sequence>MLLSKKSEYKTLSTVEHPQYIVFCDFDETYFPHTIDEQKQQDIYELEDYLEQKSKDGELIIGWVTGSSIESILDKMGRGKFRYFPHFIASDLGTEITYFSEHNFGQQDNKWNSRINEGFSKEKVEKLVKQLHENHNILLNPQTQLGKSRYKHNFYYQEQDEINDKKNLLAIEKICEEYGVSVNINRCNPLAGDPEDSYDVDFIPIGTGKNEIVTFMLEKYNLNTERAIAFGDSGNDVRMLQTVGNGYLLKNATQEAKNLHNLITDSEYSKGITNTLKKLIGS</sequence>
<accession>O07565</accession>
<accession>Q796S1</accession>
<comment type="function">
    <text evidence="2 4">Involved in the biosynthesis of kanosamine (3-amino-3-deoxy-D-glucose), which is known to have antibiotic and antifungal properties, and to be a precursor of the antibiotic neotrehalosadiamine (3,3'-diamino-3,3'-dideoxy-alpha,beta-trehalose (NTD)). Catalyzes the dephosphorylation of kanosamine 6-phosphate to yield kanosamine. There is a trace amount of activity using glucosamine-6-phosphate.</text>
</comment>
<comment type="catalytic activity">
    <reaction evidence="4">
        <text>D-kanosamine 6-phosphate + H2O = kanosamine + phosphate</text>
        <dbReference type="Rhea" id="RHEA:37555"/>
        <dbReference type="ChEBI" id="CHEBI:15377"/>
        <dbReference type="ChEBI" id="CHEBI:43474"/>
        <dbReference type="ChEBI" id="CHEBI:72732"/>
        <dbReference type="ChEBI" id="CHEBI:72748"/>
        <dbReference type="EC" id="3.1.3.92"/>
    </reaction>
</comment>
<comment type="cofactor">
    <cofactor evidence="5">
        <name>Mg(2+)</name>
        <dbReference type="ChEBI" id="CHEBI:18420"/>
    </cofactor>
</comment>
<comment type="biophysicochemical properties">
    <kinetics>
        <KM evidence="4">101 uM for kanosamine 6-phosphate (at pH 7.5 and 25 degrees Celsius)</KM>
        <text>kcat is 32 sec(-1) for dephosphorylation with kanosamine 6-phosphate (at pH 7.5 and 25 degrees Celsius).</text>
    </kinetics>
</comment>
<comment type="pathway">
    <text>Antibiotic biosynthesis; kanosamine biosynthesis.</text>
</comment>
<comment type="subunit">
    <text evidence="5">Homotetramer.</text>
</comment>
<comment type="induction">
    <text evidence="2 3">Induced by neotrehalosadiamine.</text>
</comment>
<comment type="miscellaneous">
    <text evidence="7">The production of neotrehalosadiamine is dormant in the wild-type strain. A mutation in the beta subunit of RNA polymerase activates the production of the neotrehalosadiamine (PubMed:14612444).</text>
</comment>
<comment type="similarity">
    <text evidence="6">Belongs to the HAD-like hydrolase superfamily. Cof family.</text>
</comment>
<gene>
    <name type="primary">ntdB</name>
    <name type="synonym">yhjK</name>
    <name type="ordered locus">BSU10540</name>
</gene>
<feature type="chain" id="PRO_0000054419" description="Kanosamine-6-phosphate phosphatase">
    <location>
        <begin position="1"/>
        <end position="282"/>
    </location>
</feature>
<feature type="active site" description="Nucleophile" evidence="1">
    <location>
        <position position="25"/>
    </location>
</feature>
<feature type="binding site">
    <location>
        <position position="25"/>
    </location>
    <ligand>
        <name>Mg(2+)</name>
        <dbReference type="ChEBI" id="CHEBI:18420"/>
    </ligand>
</feature>
<feature type="binding site">
    <location>
        <position position="27"/>
    </location>
    <ligand>
        <name>Mg(2+)</name>
        <dbReference type="ChEBI" id="CHEBI:18420"/>
    </ligand>
</feature>
<feature type="binding site" evidence="1">
    <location>
        <position position="209"/>
    </location>
    <ligand>
        <name>phosphate</name>
        <dbReference type="ChEBI" id="CHEBI:43474"/>
    </ligand>
</feature>
<feature type="binding site">
    <location>
        <position position="232"/>
    </location>
    <ligand>
        <name>Mg(2+)</name>
        <dbReference type="ChEBI" id="CHEBI:18420"/>
    </ligand>
</feature>
<feature type="binding site" evidence="1">
    <location>
        <position position="233"/>
    </location>
    <ligand>
        <name>Mg(2+)</name>
        <dbReference type="ChEBI" id="CHEBI:18420"/>
    </ligand>
</feature>
<feature type="binding site" evidence="1">
    <location>
        <position position="235"/>
    </location>
    <ligand>
        <name>phosphate</name>
        <dbReference type="ChEBI" id="CHEBI:43474"/>
    </ligand>
</feature>
<feature type="sequence conflict" description="In Ref. 1; CAA74473." evidence="6" ref="1">
    <original>S</original>
    <variation>FMRRK</variation>
    <location>
        <position position="282"/>
    </location>
</feature>
<feature type="helix" evidence="8">
    <location>
        <begin position="1"/>
        <end position="4"/>
    </location>
</feature>
<feature type="helix" evidence="8">
    <location>
        <begin position="5"/>
        <end position="7"/>
    </location>
</feature>
<feature type="strand" evidence="8">
    <location>
        <begin position="19"/>
        <end position="25"/>
    </location>
</feature>
<feature type="turn" evidence="8">
    <location>
        <begin position="28"/>
        <end position="30"/>
    </location>
</feature>
<feature type="helix" evidence="8">
    <location>
        <begin position="37"/>
        <end position="55"/>
    </location>
</feature>
<feature type="strand" evidence="8">
    <location>
        <begin position="59"/>
        <end position="64"/>
    </location>
</feature>
<feature type="helix" evidence="8">
    <location>
        <begin position="69"/>
        <end position="78"/>
    </location>
</feature>
<feature type="strand" evidence="8">
    <location>
        <begin position="86"/>
        <end position="90"/>
    </location>
</feature>
<feature type="turn" evidence="8">
    <location>
        <begin position="91"/>
        <end position="94"/>
    </location>
</feature>
<feature type="strand" evidence="8">
    <location>
        <begin position="95"/>
        <end position="98"/>
    </location>
</feature>
<feature type="strand" evidence="8">
    <location>
        <begin position="101"/>
        <end position="103"/>
    </location>
</feature>
<feature type="helix" evidence="8">
    <location>
        <begin position="109"/>
        <end position="116"/>
    </location>
</feature>
<feature type="helix" evidence="8">
    <location>
        <begin position="121"/>
        <end position="134"/>
    </location>
</feature>
<feature type="helix" evidence="8">
    <location>
        <begin position="142"/>
        <end position="144"/>
    </location>
</feature>
<feature type="helix" evidence="8">
    <location>
        <begin position="147"/>
        <end position="149"/>
    </location>
</feature>
<feature type="strand" evidence="8">
    <location>
        <begin position="154"/>
        <end position="157"/>
    </location>
</feature>
<feature type="helix" evidence="8">
    <location>
        <begin position="161"/>
        <end position="178"/>
    </location>
</feature>
<feature type="strand" evidence="8">
    <location>
        <begin position="180"/>
        <end position="186"/>
    </location>
</feature>
<feature type="helix" evidence="8">
    <location>
        <begin position="189"/>
        <end position="191"/>
    </location>
</feature>
<feature type="strand" evidence="8">
    <location>
        <begin position="197"/>
        <end position="205"/>
    </location>
</feature>
<feature type="helix" evidence="8">
    <location>
        <begin position="209"/>
        <end position="220"/>
    </location>
</feature>
<feature type="helix" evidence="8">
    <location>
        <begin position="224"/>
        <end position="226"/>
    </location>
</feature>
<feature type="strand" evidence="8">
    <location>
        <begin position="227"/>
        <end position="231"/>
    </location>
</feature>
<feature type="helix" evidence="8">
    <location>
        <begin position="234"/>
        <end position="236"/>
    </location>
</feature>
<feature type="helix" evidence="8">
    <location>
        <begin position="237"/>
        <end position="240"/>
    </location>
</feature>
<feature type="strand" evidence="8">
    <location>
        <begin position="243"/>
        <end position="248"/>
    </location>
</feature>
<feature type="helix" evidence="8">
    <location>
        <begin position="254"/>
        <end position="259"/>
    </location>
</feature>
<feature type="helix" evidence="8">
    <location>
        <begin position="268"/>
        <end position="279"/>
    </location>
</feature>
<reference key="1">
    <citation type="journal article" date="1998" name="Microbiology">
        <title>The 172 kb prkA-addAB region from 83 degrees to 97 degrees of the Bacillus subtilis chromosome contains several dysfunctional genes, the glyB marker, many genes encoding transporter proteins, and the ubiquitous hit gene.</title>
        <authorList>
            <person name="Noback M.A."/>
            <person name="Holsappel S."/>
            <person name="Kiewiet R."/>
            <person name="Terpstra P."/>
            <person name="Wambutt R."/>
            <person name="Wedler H."/>
            <person name="Venema G."/>
            <person name="Bron S."/>
        </authorList>
    </citation>
    <scope>NUCLEOTIDE SEQUENCE [GENOMIC DNA]</scope>
    <source>
        <strain>168</strain>
    </source>
</reference>
<reference key="2">
    <citation type="journal article" date="1997" name="Nature">
        <title>The complete genome sequence of the Gram-positive bacterium Bacillus subtilis.</title>
        <authorList>
            <person name="Kunst F."/>
            <person name="Ogasawara N."/>
            <person name="Moszer I."/>
            <person name="Albertini A.M."/>
            <person name="Alloni G."/>
            <person name="Azevedo V."/>
            <person name="Bertero M.G."/>
            <person name="Bessieres P."/>
            <person name="Bolotin A."/>
            <person name="Borchert S."/>
            <person name="Borriss R."/>
            <person name="Boursier L."/>
            <person name="Brans A."/>
            <person name="Braun M."/>
            <person name="Brignell S.C."/>
            <person name="Bron S."/>
            <person name="Brouillet S."/>
            <person name="Bruschi C.V."/>
            <person name="Caldwell B."/>
            <person name="Capuano V."/>
            <person name="Carter N.M."/>
            <person name="Choi S.-K."/>
            <person name="Codani J.-J."/>
            <person name="Connerton I.F."/>
            <person name="Cummings N.J."/>
            <person name="Daniel R.A."/>
            <person name="Denizot F."/>
            <person name="Devine K.M."/>
            <person name="Duesterhoeft A."/>
            <person name="Ehrlich S.D."/>
            <person name="Emmerson P.T."/>
            <person name="Entian K.-D."/>
            <person name="Errington J."/>
            <person name="Fabret C."/>
            <person name="Ferrari E."/>
            <person name="Foulger D."/>
            <person name="Fritz C."/>
            <person name="Fujita M."/>
            <person name="Fujita Y."/>
            <person name="Fuma S."/>
            <person name="Galizzi A."/>
            <person name="Galleron N."/>
            <person name="Ghim S.-Y."/>
            <person name="Glaser P."/>
            <person name="Goffeau A."/>
            <person name="Golightly E.J."/>
            <person name="Grandi G."/>
            <person name="Guiseppi G."/>
            <person name="Guy B.J."/>
            <person name="Haga K."/>
            <person name="Haiech J."/>
            <person name="Harwood C.R."/>
            <person name="Henaut A."/>
            <person name="Hilbert H."/>
            <person name="Holsappel S."/>
            <person name="Hosono S."/>
            <person name="Hullo M.-F."/>
            <person name="Itaya M."/>
            <person name="Jones L.-M."/>
            <person name="Joris B."/>
            <person name="Karamata D."/>
            <person name="Kasahara Y."/>
            <person name="Klaerr-Blanchard M."/>
            <person name="Klein C."/>
            <person name="Kobayashi Y."/>
            <person name="Koetter P."/>
            <person name="Koningstein G."/>
            <person name="Krogh S."/>
            <person name="Kumano M."/>
            <person name="Kurita K."/>
            <person name="Lapidus A."/>
            <person name="Lardinois S."/>
            <person name="Lauber J."/>
            <person name="Lazarevic V."/>
            <person name="Lee S.-M."/>
            <person name="Levine A."/>
            <person name="Liu H."/>
            <person name="Masuda S."/>
            <person name="Mauel C."/>
            <person name="Medigue C."/>
            <person name="Medina N."/>
            <person name="Mellado R.P."/>
            <person name="Mizuno M."/>
            <person name="Moestl D."/>
            <person name="Nakai S."/>
            <person name="Noback M."/>
            <person name="Noone D."/>
            <person name="O'Reilly M."/>
            <person name="Ogawa K."/>
            <person name="Ogiwara A."/>
            <person name="Oudega B."/>
            <person name="Park S.-H."/>
            <person name="Parro V."/>
            <person name="Pohl T.M."/>
            <person name="Portetelle D."/>
            <person name="Porwollik S."/>
            <person name="Prescott A.M."/>
            <person name="Presecan E."/>
            <person name="Pujic P."/>
            <person name="Purnelle B."/>
            <person name="Rapoport G."/>
            <person name="Rey M."/>
            <person name="Reynolds S."/>
            <person name="Rieger M."/>
            <person name="Rivolta C."/>
            <person name="Rocha E."/>
            <person name="Roche B."/>
            <person name="Rose M."/>
            <person name="Sadaie Y."/>
            <person name="Sato T."/>
            <person name="Scanlan E."/>
            <person name="Schleich S."/>
            <person name="Schroeter R."/>
            <person name="Scoffone F."/>
            <person name="Sekiguchi J."/>
            <person name="Sekowska A."/>
            <person name="Seror S.J."/>
            <person name="Serror P."/>
            <person name="Shin B.-S."/>
            <person name="Soldo B."/>
            <person name="Sorokin A."/>
            <person name="Tacconi E."/>
            <person name="Takagi T."/>
            <person name="Takahashi H."/>
            <person name="Takemaru K."/>
            <person name="Takeuchi M."/>
            <person name="Tamakoshi A."/>
            <person name="Tanaka T."/>
            <person name="Terpstra P."/>
            <person name="Tognoni A."/>
            <person name="Tosato V."/>
            <person name="Uchiyama S."/>
            <person name="Vandenbol M."/>
            <person name="Vannier F."/>
            <person name="Vassarotti A."/>
            <person name="Viari A."/>
            <person name="Wambutt R."/>
            <person name="Wedler E."/>
            <person name="Wedler H."/>
            <person name="Weitzenegger T."/>
            <person name="Winters P."/>
            <person name="Wipat A."/>
            <person name="Yamamoto H."/>
            <person name="Yamane K."/>
            <person name="Yasumoto K."/>
            <person name="Yata K."/>
            <person name="Yoshida K."/>
            <person name="Yoshikawa H.-F."/>
            <person name="Zumstein E."/>
            <person name="Yoshikawa H."/>
            <person name="Danchin A."/>
        </authorList>
    </citation>
    <scope>NUCLEOTIDE SEQUENCE [LARGE SCALE GENOMIC DNA]</scope>
    <source>
        <strain>168</strain>
    </source>
</reference>
<reference key="3">
    <citation type="journal article" date="2009" name="Microbiology">
        <title>From a consortium sequence to a unified sequence: the Bacillus subtilis 168 reference genome a decade later.</title>
        <authorList>
            <person name="Barbe V."/>
            <person name="Cruveiller S."/>
            <person name="Kunst F."/>
            <person name="Lenoble P."/>
            <person name="Meurice G."/>
            <person name="Sekowska A."/>
            <person name="Vallenet D."/>
            <person name="Wang T."/>
            <person name="Moszer I."/>
            <person name="Medigue C."/>
            <person name="Danchin A."/>
        </authorList>
    </citation>
    <scope>SEQUENCE REVISION TO C-TERMINUS</scope>
</reference>
<reference key="4">
    <citation type="journal article" date="2004" name="J. Biol. Chem.">
        <title>RNA polymerase mutation activates the production of a dormant antibiotic 3,3'-neotrehalosadiamine via an autoinduction mechanism in Bacillus subtilis.</title>
        <authorList>
            <person name="Inaoka T."/>
            <person name="Takahashi K."/>
            <person name="Yada H."/>
            <person name="Yoshida M."/>
            <person name="Ochi K."/>
        </authorList>
    </citation>
    <scope>FUNCTION IN THE NEOTREHALOSADIAMINE BIOSYNTHESIS</scope>
    <scope>INDUCTION</scope>
    <source>
        <strain>168 / 61884</strain>
    </source>
</reference>
<reference key="5">
    <citation type="journal article" date="2007" name="J. Bacteriol.">
        <title>Glucose uptake pathway-specific regulation of synthesis of neotrehalosadiamine, a novel autoinducer produced in Bacillus subtilis.</title>
        <authorList>
            <person name="Inaoka T."/>
            <person name="Ochi K."/>
        </authorList>
    </citation>
    <scope>INDUCTION</scope>
    <source>
        <strain>168 / Marburg / ATCC 6051 / DSM 10 / JCM 1465 / NBRC 13719 / NCIMB 3610 / NRRL NRS-744 / VKM B-501</strain>
    </source>
</reference>
<reference key="6">
    <citation type="journal article" date="2013" name="J. Am. Chem. Soc.">
        <title>A previously unrecognized kanosamine biosynthesis pathway in Bacillus subtilis.</title>
        <authorList>
            <person name="Vetter N.D."/>
            <person name="Langill D.M."/>
            <person name="Anjum S."/>
            <person name="Boisvert-Martel J."/>
            <person name="Jagdhane R.C."/>
            <person name="Omene E."/>
            <person name="Zheng H."/>
            <person name="van Straaten K.E."/>
            <person name="Asiamah I."/>
            <person name="Krol E.S."/>
            <person name="Sanders D.A."/>
            <person name="Palmer D.R."/>
        </authorList>
    </citation>
    <scope>FUNCTION IN THE KANOSAMINE BIOSYNTHESIS AND AS A PHOSPHATASE</scope>
    <scope>CATALYTIC ACTIVITY</scope>
    <scope>BIOPHYSICOCHEMICAL PROPERTIES</scope>
    <scope>SUBSTRATE SPECIFICITY</scope>
</reference>
<reference key="7">
    <citation type="submission" date="2011-07" db="PDB data bank">
        <title>Crystal structure of yhjk (haloacid dehalogenase-like hydrolase protein) from Bacillus subtilis.</title>
        <authorList>
            <consortium name="Midwest center for structural genomics (MCSG)"/>
        </authorList>
    </citation>
    <scope>X-RAY CRYSTALLOGRAPHY (2.45 ANGSTROMS) OF 1-281 IN COMPLEX WITH MAGNESIUM ION</scope>
    <scope>COFACTOR</scope>
    <scope>SUBUNIT</scope>
</reference>
<protein>
    <recommendedName>
        <fullName>Kanosamine-6-phosphate phosphatase</fullName>
        <ecNumber>3.1.3.92</ecNumber>
    </recommendedName>
</protein>
<name>NTDB_BACSU</name>
<proteinExistence type="evidence at protein level"/>
<keyword id="KW-0002">3D-structure</keyword>
<keyword id="KW-0045">Antibiotic biosynthesis</keyword>
<keyword id="KW-0378">Hydrolase</keyword>
<keyword id="KW-0460">Magnesium</keyword>
<keyword id="KW-0479">Metal-binding</keyword>
<keyword id="KW-1185">Reference proteome</keyword>